<accession>Q2UES9</accession>
<comment type="function">
    <text evidence="1">N-acetylglutamate synthase involved in arginine biosynthesis.</text>
</comment>
<comment type="catalytic activity">
    <reaction>
        <text>L-glutamate + acetyl-CoA = N-acetyl-L-glutamate + CoA + H(+)</text>
        <dbReference type="Rhea" id="RHEA:24292"/>
        <dbReference type="ChEBI" id="CHEBI:15378"/>
        <dbReference type="ChEBI" id="CHEBI:29985"/>
        <dbReference type="ChEBI" id="CHEBI:44337"/>
        <dbReference type="ChEBI" id="CHEBI:57287"/>
        <dbReference type="ChEBI" id="CHEBI:57288"/>
        <dbReference type="EC" id="2.3.1.1"/>
    </reaction>
</comment>
<comment type="pathway">
    <text>Amino-acid biosynthesis; L-arginine biosynthesis; N(2)-acetyl-L-ornithine from L-glutamate: step 1/4.</text>
</comment>
<comment type="subcellular location">
    <subcellularLocation>
        <location evidence="1">Mitochondrion</location>
    </subcellularLocation>
</comment>
<comment type="similarity">
    <text evidence="5">Belongs to the acetyltransferase family.</text>
</comment>
<organism>
    <name type="scientific">Aspergillus oryzae (strain ATCC 42149 / RIB 40)</name>
    <name type="common">Yellow koji mold</name>
    <dbReference type="NCBI Taxonomy" id="510516"/>
    <lineage>
        <taxon>Eukaryota</taxon>
        <taxon>Fungi</taxon>
        <taxon>Dikarya</taxon>
        <taxon>Ascomycota</taxon>
        <taxon>Pezizomycotina</taxon>
        <taxon>Eurotiomycetes</taxon>
        <taxon>Eurotiomycetidae</taxon>
        <taxon>Eurotiales</taxon>
        <taxon>Aspergillaceae</taxon>
        <taxon>Aspergillus</taxon>
        <taxon>Aspergillus subgen. Circumdati</taxon>
    </lineage>
</organism>
<keyword id="KW-0012">Acyltransferase</keyword>
<keyword id="KW-0028">Amino-acid biosynthesis</keyword>
<keyword id="KW-0496">Mitochondrion</keyword>
<keyword id="KW-1185">Reference proteome</keyword>
<keyword id="KW-0808">Transferase</keyword>
<keyword id="KW-0809">Transit peptide</keyword>
<gene>
    <name type="primary">arg2</name>
    <name type="ORF">AO090026000498</name>
</gene>
<name>NAGS_ASPOR</name>
<reference key="1">
    <citation type="journal article" date="2005" name="Nature">
        <title>Genome sequencing and analysis of Aspergillus oryzae.</title>
        <authorList>
            <person name="Machida M."/>
            <person name="Asai K."/>
            <person name="Sano M."/>
            <person name="Tanaka T."/>
            <person name="Kumagai T."/>
            <person name="Terai G."/>
            <person name="Kusumoto K."/>
            <person name="Arima T."/>
            <person name="Akita O."/>
            <person name="Kashiwagi Y."/>
            <person name="Abe K."/>
            <person name="Gomi K."/>
            <person name="Horiuchi H."/>
            <person name="Kitamoto K."/>
            <person name="Kobayashi T."/>
            <person name="Takeuchi M."/>
            <person name="Denning D.W."/>
            <person name="Galagan J.E."/>
            <person name="Nierman W.C."/>
            <person name="Yu J."/>
            <person name="Archer D.B."/>
            <person name="Bennett J.W."/>
            <person name="Bhatnagar D."/>
            <person name="Cleveland T.E."/>
            <person name="Fedorova N.D."/>
            <person name="Gotoh O."/>
            <person name="Horikawa H."/>
            <person name="Hosoyama A."/>
            <person name="Ichinomiya M."/>
            <person name="Igarashi R."/>
            <person name="Iwashita K."/>
            <person name="Juvvadi P.R."/>
            <person name="Kato M."/>
            <person name="Kato Y."/>
            <person name="Kin T."/>
            <person name="Kokubun A."/>
            <person name="Maeda H."/>
            <person name="Maeyama N."/>
            <person name="Maruyama J."/>
            <person name="Nagasaki H."/>
            <person name="Nakajima T."/>
            <person name="Oda K."/>
            <person name="Okada K."/>
            <person name="Paulsen I."/>
            <person name="Sakamoto K."/>
            <person name="Sawano T."/>
            <person name="Takahashi M."/>
            <person name="Takase K."/>
            <person name="Terabayashi Y."/>
            <person name="Wortman J.R."/>
            <person name="Yamada O."/>
            <person name="Yamagata Y."/>
            <person name="Anazawa H."/>
            <person name="Hata Y."/>
            <person name="Koide Y."/>
            <person name="Komori T."/>
            <person name="Koyama Y."/>
            <person name="Minetoki T."/>
            <person name="Suharnan S."/>
            <person name="Tanaka A."/>
            <person name="Isono K."/>
            <person name="Kuhara S."/>
            <person name="Ogasawara N."/>
            <person name="Kikuchi H."/>
        </authorList>
    </citation>
    <scope>NUCLEOTIDE SEQUENCE [LARGE SCALE GENOMIC DNA]</scope>
    <source>
        <strain>ATCC 42149 / RIB 40</strain>
    </source>
</reference>
<protein>
    <recommendedName>
        <fullName>Amino-acid acetyltransferase, mitochondrial</fullName>
        <ecNumber>2.3.1.1</ecNumber>
    </recommendedName>
    <alternativeName>
        <fullName>Arginine-requiring protein 2</fullName>
    </alternativeName>
    <alternativeName>
        <fullName>Glutamate N-acetyltransferase</fullName>
    </alternativeName>
    <alternativeName>
        <fullName>N-acetylglutamate synthase</fullName>
        <shortName>AGS</shortName>
        <shortName>NAGS</shortName>
    </alternativeName>
</protein>
<dbReference type="EC" id="2.3.1.1"/>
<dbReference type="EMBL" id="BA000051">
    <property type="protein sequence ID" value="BAE59936.1"/>
    <property type="molecule type" value="Genomic_DNA"/>
</dbReference>
<dbReference type="SMR" id="Q2UES9"/>
<dbReference type="STRING" id="510516.Q2UES9"/>
<dbReference type="EnsemblFungi" id="BAE59936">
    <property type="protein sequence ID" value="BAE59936"/>
    <property type="gene ID" value="AO090026000498"/>
</dbReference>
<dbReference type="HOGENOM" id="CLU_013088_0_0_1"/>
<dbReference type="UniPathway" id="UPA00068">
    <property type="reaction ID" value="UER00106"/>
</dbReference>
<dbReference type="Proteomes" id="UP000006564">
    <property type="component" value="Chromosome 3"/>
</dbReference>
<dbReference type="GO" id="GO:0005759">
    <property type="term" value="C:mitochondrial matrix"/>
    <property type="evidence" value="ECO:0007669"/>
    <property type="project" value="TreeGrafter"/>
</dbReference>
<dbReference type="GO" id="GO:0004042">
    <property type="term" value="F:L-glutamate N-acetyltransferase activity"/>
    <property type="evidence" value="ECO:0007669"/>
    <property type="project" value="InterPro"/>
</dbReference>
<dbReference type="GO" id="GO:0006526">
    <property type="term" value="P:L-arginine biosynthetic process"/>
    <property type="evidence" value="ECO:0007669"/>
    <property type="project" value="UniProtKB-UniPathway"/>
</dbReference>
<dbReference type="GO" id="GO:0006592">
    <property type="term" value="P:ornithine biosynthetic process"/>
    <property type="evidence" value="ECO:0007669"/>
    <property type="project" value="TreeGrafter"/>
</dbReference>
<dbReference type="FunFam" id="3.40.630.30:FF:000049">
    <property type="entry name" value="Amino-acid acetyltransferase, mitochondrial"/>
    <property type="match status" value="1"/>
</dbReference>
<dbReference type="Gene3D" id="3.40.630.30">
    <property type="match status" value="1"/>
</dbReference>
<dbReference type="InterPro" id="IPR011190">
    <property type="entry name" value="GlcNAc_Synth_fun"/>
</dbReference>
<dbReference type="InterPro" id="IPR006855">
    <property type="entry name" value="Vertebrate-like_GNAT_dom"/>
</dbReference>
<dbReference type="PANTHER" id="PTHR23342:SF4">
    <property type="entry name" value="AMINO-ACID ACETYLTRANSFERASE, MITOCHONDRIAL"/>
    <property type="match status" value="1"/>
</dbReference>
<dbReference type="PANTHER" id="PTHR23342">
    <property type="entry name" value="N-ACETYLGLUTAMATE SYNTHASE"/>
    <property type="match status" value="1"/>
</dbReference>
<dbReference type="Pfam" id="PF04768">
    <property type="entry name" value="NAT"/>
    <property type="match status" value="1"/>
</dbReference>
<dbReference type="PIRSF" id="PIRSF007892">
    <property type="entry name" value="NAGS_fungal"/>
    <property type="match status" value="1"/>
</dbReference>
<dbReference type="PROSITE" id="PS51731">
    <property type="entry name" value="GNAT_NAGS"/>
    <property type="match status" value="1"/>
</dbReference>
<evidence type="ECO:0000250" key="1"/>
<evidence type="ECO:0000255" key="2"/>
<evidence type="ECO:0000255" key="3">
    <source>
        <dbReference type="PROSITE-ProRule" id="PRU00532"/>
    </source>
</evidence>
<evidence type="ECO:0000256" key="4">
    <source>
        <dbReference type="SAM" id="MobiDB-lite"/>
    </source>
</evidence>
<evidence type="ECO:0000305" key="5"/>
<feature type="transit peptide" description="Mitochondrion" evidence="2">
    <location>
        <begin position="1"/>
        <end status="unknown"/>
    </location>
</feature>
<feature type="chain" id="PRO_0000372553" description="Amino-acid acetyltransferase, mitochondrial">
    <location>
        <begin status="unknown"/>
        <end position="678"/>
    </location>
</feature>
<feature type="domain" description="N-acetyltransferase" evidence="3">
    <location>
        <begin position="499"/>
        <end position="668"/>
    </location>
</feature>
<feature type="region of interest" description="Disordered" evidence="4">
    <location>
        <begin position="86"/>
        <end position="111"/>
    </location>
</feature>
<feature type="compositionally biased region" description="Polar residues" evidence="4">
    <location>
        <begin position="96"/>
        <end position="111"/>
    </location>
</feature>
<sequence>MAAVKSCVEEEKIDCDLDFDKVIDVQLDDNHCAKLKAGYESLLSRGALTVTEADFTPNETAESEFFLSLLNSASTKREAKSYLARLKAQHPPKAQTEPTTGHSKGTVTQSLPSGVNLGSFYGASRSVYDSPVFRHDSTPLPPPSELPEERLHLALIKIRTPQLLDDTIINGVAKTLSQLSRLGMACCVVVDPGTAGNANTLRRVAAEQAERISIAVDAQPDSKSAHLDSVLSLSPMFPELPTVLSRKALLNPLRDGQIVVVAPIAYTEDVPKAVTISANDAILALTKELAGLAMRPDPDEDPWLTAQKIAKLQKEVSLDRVILLDPLGGIPSFRGPQTSHVFINMEQEFDDIKNELLHVQSSEACTATTPKGGNTFVEDPLERHLDNLQLSQNVLAMLPSASSGIITSPLEVSNSARTPQANPSDVSAVGTRRQRNPLIHNLLTDKPLLSSSLPMSRREAMNRRRGSINTPSSHTTFVKRGMPLTMIPNPRVEVWTAQNRPRLSLDDPSIDLPRLVQLIEDSFNRKLDVQDYLNRVNDRLAGLIIAGEYEGGAILTWELPPGVEDDGSPASEARMVPYLDKFAVLKRSQGAGGVADIVFNAMVRSCFPNGVCWRSRKDNPVNKWYFERSTGTWKLSDTNWTMFWTTPGLTENSQRFSDYEQVCRSIQPSWADDTGVVD</sequence>
<proteinExistence type="inferred from homology"/>